<protein>
    <recommendedName>
        <fullName evidence="1">Na(+)/H(+) antiporter NhaA 1</fullName>
    </recommendedName>
    <alternativeName>
        <fullName evidence="1">Sodium/proton antiporter NhaA 1</fullName>
    </alternativeName>
</protein>
<accession>A1SDK4</accession>
<feature type="chain" id="PRO_0000334349" description="Na(+)/H(+) antiporter NhaA 1">
    <location>
        <begin position="1"/>
        <end position="434"/>
    </location>
</feature>
<feature type="transmembrane region" description="Helical" evidence="1">
    <location>
        <begin position="34"/>
        <end position="54"/>
    </location>
</feature>
<feature type="transmembrane region" description="Helical" evidence="1">
    <location>
        <begin position="73"/>
        <end position="93"/>
    </location>
</feature>
<feature type="transmembrane region" description="Helical" evidence="1">
    <location>
        <begin position="111"/>
        <end position="131"/>
    </location>
</feature>
<feature type="transmembrane region" description="Helical" evidence="1">
    <location>
        <begin position="141"/>
        <end position="161"/>
    </location>
</feature>
<feature type="transmembrane region" description="Helical" evidence="1">
    <location>
        <begin position="171"/>
        <end position="191"/>
    </location>
</feature>
<feature type="transmembrane region" description="Helical" evidence="1">
    <location>
        <begin position="194"/>
        <end position="214"/>
    </location>
</feature>
<feature type="transmembrane region" description="Helical" evidence="1">
    <location>
        <begin position="233"/>
        <end position="253"/>
    </location>
</feature>
<feature type="transmembrane region" description="Helical" evidence="1">
    <location>
        <begin position="278"/>
        <end position="298"/>
    </location>
</feature>
<feature type="transmembrane region" description="Helical" evidence="1">
    <location>
        <begin position="313"/>
        <end position="333"/>
    </location>
</feature>
<feature type="transmembrane region" description="Helical" evidence="1">
    <location>
        <begin position="346"/>
        <end position="366"/>
    </location>
</feature>
<feature type="transmembrane region" description="Helical" evidence="1">
    <location>
        <begin position="380"/>
        <end position="400"/>
    </location>
</feature>
<comment type="function">
    <text evidence="1">Na(+)/H(+) antiporter that extrudes sodium in exchange for external protons.</text>
</comment>
<comment type="catalytic activity">
    <reaction evidence="1">
        <text>Na(+)(in) + 2 H(+)(out) = Na(+)(out) + 2 H(+)(in)</text>
        <dbReference type="Rhea" id="RHEA:29251"/>
        <dbReference type="ChEBI" id="CHEBI:15378"/>
        <dbReference type="ChEBI" id="CHEBI:29101"/>
    </reaction>
    <physiologicalReaction direction="left-to-right" evidence="1">
        <dbReference type="Rhea" id="RHEA:29252"/>
    </physiologicalReaction>
</comment>
<comment type="subcellular location">
    <subcellularLocation>
        <location evidence="1">Cell membrane</location>
        <topology evidence="1">Multi-pass membrane protein</topology>
    </subcellularLocation>
</comment>
<comment type="similarity">
    <text evidence="1">Belongs to the NhaA Na(+)/H(+) (TC 2.A.33) antiporter family.</text>
</comment>
<sequence length="434" mass="45691">MTGRRPTRPRLFSRGSFLESSRVADILRAETTGGLLLIAAATVAIVWANTPWSASYADLRDLRVGPQAWHLDLTLGAWAADGLLAIFFFVAGLELKREFVAGDLRDPRRAALPVVAAMGGMAVPALVYVLWNLGGDGALQGWAIPTATDIAFAVAILAVISTHLPTGLRTFLLTLAVVDDLLAITIIALFYTDELHLGYLAAAAVPLLVFALLVQRRIHRGWLLIPLAATAWVLVHESGVHATVAGVLLGFAVPVLRSDGQEGPGLAEHLEHLVRPLSAGLAVPVFAFFAAGVTVGGFDGLVDALSDPVALGVVTGLVVGKTVGIAGSTWLLATFTRADLDDQLSWVDVVGLAMLAGIGFTVSLLIGELAFGSGTPRDDHVKVGVLVGSLAATALATGVLRMRNRAYRRLVEIEEQDADADGVPDVYQRDADEG</sequence>
<keyword id="KW-0050">Antiport</keyword>
<keyword id="KW-1003">Cell membrane</keyword>
<keyword id="KW-0406">Ion transport</keyword>
<keyword id="KW-0472">Membrane</keyword>
<keyword id="KW-1185">Reference proteome</keyword>
<keyword id="KW-0915">Sodium</keyword>
<keyword id="KW-0739">Sodium transport</keyword>
<keyword id="KW-0812">Transmembrane</keyword>
<keyword id="KW-1133">Transmembrane helix</keyword>
<keyword id="KW-0813">Transport</keyword>
<gene>
    <name evidence="1" type="primary">nhaA1</name>
    <name type="ordered locus">Noca_0345</name>
</gene>
<name>NHAA1_NOCSJ</name>
<organism>
    <name type="scientific">Nocardioides sp. (strain ATCC BAA-499 / JS614)</name>
    <dbReference type="NCBI Taxonomy" id="196162"/>
    <lineage>
        <taxon>Bacteria</taxon>
        <taxon>Bacillati</taxon>
        <taxon>Actinomycetota</taxon>
        <taxon>Actinomycetes</taxon>
        <taxon>Propionibacteriales</taxon>
        <taxon>Nocardioidaceae</taxon>
        <taxon>Nocardioides</taxon>
    </lineage>
</organism>
<dbReference type="EMBL" id="CP000509">
    <property type="protein sequence ID" value="ABL79889.1"/>
    <property type="molecule type" value="Genomic_DNA"/>
</dbReference>
<dbReference type="SMR" id="A1SDK4"/>
<dbReference type="STRING" id="196162.Noca_0345"/>
<dbReference type="KEGG" id="nca:Noca_0345"/>
<dbReference type="eggNOG" id="COG3004">
    <property type="taxonomic scope" value="Bacteria"/>
</dbReference>
<dbReference type="HOGENOM" id="CLU_015803_0_0_11"/>
<dbReference type="OrthoDB" id="117402at2"/>
<dbReference type="Proteomes" id="UP000000640">
    <property type="component" value="Chromosome"/>
</dbReference>
<dbReference type="GO" id="GO:0005886">
    <property type="term" value="C:plasma membrane"/>
    <property type="evidence" value="ECO:0007669"/>
    <property type="project" value="UniProtKB-SubCell"/>
</dbReference>
<dbReference type="GO" id="GO:0015385">
    <property type="term" value="F:sodium:proton antiporter activity"/>
    <property type="evidence" value="ECO:0007669"/>
    <property type="project" value="TreeGrafter"/>
</dbReference>
<dbReference type="GO" id="GO:0006885">
    <property type="term" value="P:regulation of pH"/>
    <property type="evidence" value="ECO:0007669"/>
    <property type="project" value="InterPro"/>
</dbReference>
<dbReference type="Gene3D" id="1.20.1530.10">
    <property type="entry name" value="Na+/H+ antiporter like domain"/>
    <property type="match status" value="1"/>
</dbReference>
<dbReference type="HAMAP" id="MF_01844">
    <property type="entry name" value="NhaA"/>
    <property type="match status" value="1"/>
</dbReference>
<dbReference type="InterPro" id="IPR023171">
    <property type="entry name" value="Na/H_antiporter_dom_sf"/>
</dbReference>
<dbReference type="InterPro" id="IPR004670">
    <property type="entry name" value="NhaA"/>
</dbReference>
<dbReference type="NCBIfam" id="TIGR00773">
    <property type="entry name" value="NhaA"/>
    <property type="match status" value="1"/>
</dbReference>
<dbReference type="PANTHER" id="PTHR30341:SF0">
    <property type="entry name" value="NA(+)_H(+) ANTIPORTER NHAA"/>
    <property type="match status" value="1"/>
</dbReference>
<dbReference type="PANTHER" id="PTHR30341">
    <property type="entry name" value="SODIUM ION/PROTON ANTIPORTER NHAA-RELATED"/>
    <property type="match status" value="1"/>
</dbReference>
<dbReference type="Pfam" id="PF06965">
    <property type="entry name" value="Na_H_antiport_1"/>
    <property type="match status" value="1"/>
</dbReference>
<reference key="1">
    <citation type="submission" date="2006-12" db="EMBL/GenBank/DDBJ databases">
        <title>Complete sequence of chromosome 1 of Nocardioides sp. JS614.</title>
        <authorList>
            <person name="Copeland A."/>
            <person name="Lucas S."/>
            <person name="Lapidus A."/>
            <person name="Barry K."/>
            <person name="Detter J.C."/>
            <person name="Glavina del Rio T."/>
            <person name="Hammon N."/>
            <person name="Israni S."/>
            <person name="Dalin E."/>
            <person name="Tice H."/>
            <person name="Pitluck S."/>
            <person name="Thompson L.S."/>
            <person name="Brettin T."/>
            <person name="Bruce D."/>
            <person name="Han C."/>
            <person name="Tapia R."/>
            <person name="Schmutz J."/>
            <person name="Larimer F."/>
            <person name="Land M."/>
            <person name="Hauser L."/>
            <person name="Kyrpides N."/>
            <person name="Kim E."/>
            <person name="Mattes T."/>
            <person name="Gossett J."/>
            <person name="Richardson P."/>
        </authorList>
    </citation>
    <scope>NUCLEOTIDE SEQUENCE [LARGE SCALE GENOMIC DNA]</scope>
    <source>
        <strain>ATCC BAA-499 / JS614</strain>
    </source>
</reference>
<evidence type="ECO:0000255" key="1">
    <source>
        <dbReference type="HAMAP-Rule" id="MF_01844"/>
    </source>
</evidence>
<proteinExistence type="inferred from homology"/>